<reference key="1">
    <citation type="journal article" date="2004" name="Genome Res.">
        <title>The status, quality, and expansion of the NIH full-length cDNA project: the Mammalian Gene Collection (MGC).</title>
        <authorList>
            <consortium name="The MGC Project Team"/>
        </authorList>
    </citation>
    <scope>NUCLEOTIDE SEQUENCE [LARGE SCALE MRNA]</scope>
    <source>
        <strain>FVB/N</strain>
        <tissue>Mammary tumor</tissue>
    </source>
</reference>
<reference key="2">
    <citation type="submission" date="2001-08" db="EMBL/GenBank/DDBJ databases">
        <title>Identification of the mouse GNMT and PEX6 genes.</title>
        <authorList>
            <person name="Chen Y.-M.A."/>
            <person name="Wang Y.-C."/>
            <person name="Liu S.-P."/>
            <person name="Lee C.-M."/>
            <person name="Tsai T.-F."/>
        </authorList>
    </citation>
    <scope>NUCLEOTIDE SEQUENCE [GENOMIC DNA] OF 379-981</scope>
    <source>
        <strain>129/SvEv</strain>
    </source>
</reference>
<reference key="3">
    <citation type="journal article" date="2010" name="Cell">
        <title>A tissue-specific atlas of mouse protein phosphorylation and expression.</title>
        <authorList>
            <person name="Huttlin E.L."/>
            <person name="Jedrychowski M.P."/>
            <person name="Elias J.E."/>
            <person name="Goswami T."/>
            <person name="Rad R."/>
            <person name="Beausoleil S.A."/>
            <person name="Villen J."/>
            <person name="Haas W."/>
            <person name="Sowa M.E."/>
            <person name="Gygi S.P."/>
        </authorList>
    </citation>
    <scope>IDENTIFICATION BY MASS SPECTROMETRY [LARGE SCALE ANALYSIS]</scope>
    <source>
        <tissue>Brain</tissue>
        <tissue>Brown adipose tissue</tissue>
        <tissue>Liver</tissue>
        <tissue>Lung</tissue>
        <tissue>Spleen</tissue>
        <tissue>Testis</tissue>
    </source>
</reference>
<reference key="4">
    <citation type="journal article" date="2016" name="Eur. J. Hum. Genet.">
        <title>Spectrum of PEX1 and PEX6 variants in Heimler syndrome.</title>
        <authorList>
            <person name="Smith C.E."/>
            <person name="Poulter J.A."/>
            <person name="Levin A.V."/>
            <person name="Capasso J.E."/>
            <person name="Price S."/>
            <person name="Ben-Yosef T."/>
            <person name="Sharony R."/>
            <person name="Newman W.G."/>
            <person name="Shore R.C."/>
            <person name="Brookes S.J."/>
            <person name="Mighell A.J."/>
            <person name="Inglehearn C.F."/>
        </authorList>
    </citation>
    <scope>TISSUE SPECIFICITY</scope>
</reference>
<reference key="5">
    <citation type="journal article" date="2016" name="Hum. Mutat.">
        <title>PEX6 is expressed in photoreceptor cilia and mutated in deafblindness with enamel dysplasia and microcephaly.</title>
        <authorList>
            <person name="Zaki M.S."/>
            <person name="Heller R."/>
            <person name="Thoenes M."/>
            <person name="Nuernberg G."/>
            <person name="Stern-Schneider G."/>
            <person name="Nuernberg P."/>
            <person name="Karnati S."/>
            <person name="Swan D."/>
            <person name="Fateen E."/>
            <person name="Nagel-Wolfrum K."/>
            <person name="Mostafa M.I."/>
            <person name="Thiele H."/>
            <person name="Wolfrum U."/>
            <person name="Baumgart-Vogt E."/>
            <person name="Bolz H.J."/>
        </authorList>
    </citation>
    <scope>TISSUE SPECIFICITY</scope>
    <scope>SUBCELLULAR LOCATION</scope>
</reference>
<evidence type="ECO:0000250" key="1">
    <source>
        <dbReference type="UniProtKB" id="Q13608"/>
    </source>
</evidence>
<evidence type="ECO:0000255" key="2"/>
<evidence type="ECO:0000269" key="3">
    <source>
    </source>
</evidence>
<evidence type="ECO:0000269" key="4">
    <source>
    </source>
</evidence>
<evidence type="ECO:0000303" key="5">
    <source>
    </source>
</evidence>
<evidence type="ECO:0000305" key="6"/>
<evidence type="ECO:0000312" key="7">
    <source>
        <dbReference type="MGI" id="MGI:2385054"/>
    </source>
</evidence>
<sequence length="981" mass="104549">MALAVLRVLDPFPTETPPLAVLLPPGGPWPATGLGLVLALRPASESPAKPALLVAAVEGSGAQGEQRGPGPPPLLVSRALLRVLALGPGARVRARLVRRPPALGWALLATAPGPGLGPRVGPLLVRRGETLPVPGSRVLETRPALQGLLGPGTRLAVTELRGRAKLGQESRDHSHPPPPPVVSSFAASHSVRRLRGVLGGTGDALGVSRSCLRSLGLFQGEWVWVAQVAELPNSSQPRLAQVQVLEPRWELSERLGPNSGQQPGEPLADGLVFLPATLAFNLGCDPLEVGELRIQRYLEGSIAPENKGSCSPLPGPPFARELHIEILSSPHYSANGNYDHVLYRHFQTPRVVQEGDVLCVSTAGQVEILEGSLERLPRWREMFFKVKKTVGEAPEGPASAFLADTTHTSLYLAGTALSHVPSLPSGRSPPWDSLSPPGLEALVNELCAILKPHLQPGGTLLTGTSCVLLQGPPGSGKTTAVTAACSRLGLHLLKVPCSSLCADSSRAVETKLQATFSRARRCRPAVLLLTAVDLLGRDRDGLGEDARVAATLRHLLLDEDALSRCPPLMVVATTSRVQDLPTDVQTAFPHELEVPVLSEAQRLSILQALTAHLPLGQEVNLPQLARRCAGFVVGDLYALLTHTCRAACTRIRASGSAGGLSEEDEGDLCVAGFPLLAEDFGQALDQLQTAHSQAVGAPRIPSVSWHDVGGLQDVKKEILETIQLPLEHPELLSLGLRRSGLLLHGPPGTGKTLLAKAVATECSLTFLSVKGPELINMYVGQSEENVREVFARARAAAPCIIFFDELDSLAPSRGRSGDSGGVMDRVVSQLLAELDGLHSTQDVFVIGATNRPDLLDPALLRPGRFDKLVFVGASEDRASQLRVLSAITRKFKLEASVSLANVLDCCPPQLTGADLYSLCSDAMMTALKRRVRDLEEGLELRSSALLLTMEDLLQAAARLQPSVSEQELLRYKRIQRKFAAC</sequence>
<feature type="chain" id="PRO_0000084608" description="Peroxisomal ATPase PEX6">
    <location>
        <begin position="1"/>
        <end position="981"/>
    </location>
</feature>
<feature type="binding site" evidence="2">
    <location>
        <begin position="471"/>
        <end position="478"/>
    </location>
    <ligand>
        <name>ATP</name>
        <dbReference type="ChEBI" id="CHEBI:30616"/>
    </ligand>
</feature>
<feature type="binding site" evidence="2">
    <location>
        <begin position="745"/>
        <end position="752"/>
    </location>
    <ligand>
        <name>ATP</name>
        <dbReference type="ChEBI" id="CHEBI:30616"/>
    </ligand>
</feature>
<feature type="modified residue" description="Omega-N-methylarginine" evidence="1">
    <location>
        <position position="119"/>
    </location>
</feature>
<feature type="sequence conflict" description="In Ref. 2; AAL06143." evidence="6" ref="2">
    <original>R</original>
    <variation>H</variation>
    <location>
        <position position="520"/>
    </location>
</feature>
<feature type="sequence conflict" description="In Ref. 2; AAL06143." evidence="6" ref="2">
    <original>A</original>
    <variation>P</variation>
    <location>
        <position position="895"/>
    </location>
</feature>
<keyword id="KW-0067">ATP-binding</keyword>
<keyword id="KW-0966">Cell projection</keyword>
<keyword id="KW-0963">Cytoplasm</keyword>
<keyword id="KW-0378">Hydrolase</keyword>
<keyword id="KW-0472">Membrane</keyword>
<keyword id="KW-0488">Methylation</keyword>
<keyword id="KW-0547">Nucleotide-binding</keyword>
<keyword id="KW-0576">Peroxisome</keyword>
<keyword id="KW-0962">Peroxisome biogenesis</keyword>
<keyword id="KW-1185">Reference proteome</keyword>
<keyword id="KW-0677">Repeat</keyword>
<comment type="function">
    <text evidence="1">Component of the PEX1-PEX6 AAA ATPase complex, a protein dislocase complex that mediates the ATP-dependent extraction of the PEX5 receptor from peroxisomal membranes, an essential step for PEX5 recycling. Specifically recognizes PEX5 monoubiquitinated at 'Cys-11', and pulls it out of the peroxisome lumen through the PEX2-PEX10-PEX12 retrotranslocation channel. Extraction by the PEX1-PEX6 AAA ATPase complex is accompanied by unfolding of the TPR repeats and release of bound cargo from PEX5.</text>
</comment>
<comment type="catalytic activity">
    <reaction evidence="1">
        <text>ATP + H2O = ADP + phosphate + H(+)</text>
        <dbReference type="Rhea" id="RHEA:13065"/>
        <dbReference type="ChEBI" id="CHEBI:15377"/>
        <dbReference type="ChEBI" id="CHEBI:15378"/>
        <dbReference type="ChEBI" id="CHEBI:30616"/>
        <dbReference type="ChEBI" id="CHEBI:43474"/>
        <dbReference type="ChEBI" id="CHEBI:456216"/>
    </reaction>
    <physiologicalReaction direction="left-to-right" evidence="1">
        <dbReference type="Rhea" id="RHEA:13066"/>
    </physiologicalReaction>
</comment>
<comment type="subunit">
    <text evidence="1">Interacts with PEX1; forming the PEX1-PEX6 AAA ATPase complex, which is composed of a heterohexamer formed by a trimer of PEX1-PEX6 dimers. Interacts with PEX26; interaction is direct and promotes recruitment to peroxisomal membranes. Interacts with ZFAND6.</text>
</comment>
<comment type="subcellular location">
    <subcellularLocation>
        <location evidence="1">Cytoplasm</location>
        <location evidence="1">Cytosol</location>
    </subcellularLocation>
    <subcellularLocation>
        <location evidence="1">Peroxisome membrane</location>
    </subcellularLocation>
    <subcellularLocation>
        <location evidence="3">Cell projection</location>
        <location evidence="3">Cilium</location>
        <location evidence="3">Photoreceptor outer segment</location>
    </subcellularLocation>
    <text evidence="1 3">Associated with peroxisomal membranes; anchored by PEX26 to peroxisome membranes (By similarity). Localized at the base of the outer segment of photoreceptor cells (PubMed:26593283).</text>
</comment>
<comment type="tissue specificity">
    <text evidence="3 4">In the teeth, expressed in ameloblasts and odontoblasts (PubMed:26593283). Expressed in the retina, at higher levels in the ganglion cell layer and photoreceptor layer at the joint between the outer and inner segments (PubMed:26593283, PubMed:27302843).</text>
</comment>
<comment type="similarity">
    <text evidence="6">Belongs to the AAA ATPase family.</text>
</comment>
<organism>
    <name type="scientific">Mus musculus</name>
    <name type="common">Mouse</name>
    <dbReference type="NCBI Taxonomy" id="10090"/>
    <lineage>
        <taxon>Eukaryota</taxon>
        <taxon>Metazoa</taxon>
        <taxon>Chordata</taxon>
        <taxon>Craniata</taxon>
        <taxon>Vertebrata</taxon>
        <taxon>Euteleostomi</taxon>
        <taxon>Mammalia</taxon>
        <taxon>Eutheria</taxon>
        <taxon>Euarchontoglires</taxon>
        <taxon>Glires</taxon>
        <taxon>Rodentia</taxon>
        <taxon>Myomorpha</taxon>
        <taxon>Muroidea</taxon>
        <taxon>Muridae</taxon>
        <taxon>Murinae</taxon>
        <taxon>Mus</taxon>
        <taxon>Mus</taxon>
    </lineage>
</organism>
<dbReference type="EC" id="3.6.4.-" evidence="1"/>
<dbReference type="EMBL" id="BC003424">
    <property type="protein sequence ID" value="AAH03424.1"/>
    <property type="molecule type" value="mRNA"/>
</dbReference>
<dbReference type="EMBL" id="AY054409">
    <property type="protein sequence ID" value="AAL06143.1"/>
    <property type="molecule type" value="Genomic_DNA"/>
</dbReference>
<dbReference type="CCDS" id="CCDS28837.1"/>
<dbReference type="RefSeq" id="NP_663463.1">
    <property type="nucleotide sequence ID" value="NM_145488.2"/>
</dbReference>
<dbReference type="SMR" id="Q99LC9"/>
<dbReference type="BioGRID" id="230326">
    <property type="interactions" value="7"/>
</dbReference>
<dbReference type="FunCoup" id="Q99LC9">
    <property type="interactions" value="1373"/>
</dbReference>
<dbReference type="STRING" id="10090.ENSMUSP00000002840"/>
<dbReference type="iPTMnet" id="Q99LC9"/>
<dbReference type="PhosphoSitePlus" id="Q99LC9"/>
<dbReference type="jPOST" id="Q99LC9"/>
<dbReference type="PaxDb" id="10090-ENSMUSP00000002840"/>
<dbReference type="PeptideAtlas" id="Q99LC9"/>
<dbReference type="ProteomicsDB" id="288044"/>
<dbReference type="Pumba" id="Q99LC9"/>
<dbReference type="Antibodypedia" id="16146">
    <property type="antibodies" value="208 antibodies from 32 providers"/>
</dbReference>
<dbReference type="DNASU" id="224824"/>
<dbReference type="Ensembl" id="ENSMUST00000002840.9">
    <property type="protein sequence ID" value="ENSMUSP00000002840.9"/>
    <property type="gene ID" value="ENSMUSG00000002763.17"/>
</dbReference>
<dbReference type="GeneID" id="224824"/>
<dbReference type="KEGG" id="mmu:224824"/>
<dbReference type="UCSC" id="uc008cud.1">
    <property type="organism name" value="mouse"/>
</dbReference>
<dbReference type="AGR" id="MGI:2385054"/>
<dbReference type="CTD" id="5190"/>
<dbReference type="MGI" id="MGI:2385054">
    <property type="gene designation" value="Pex6"/>
</dbReference>
<dbReference type="VEuPathDB" id="HostDB:ENSMUSG00000002763"/>
<dbReference type="eggNOG" id="KOG0736">
    <property type="taxonomic scope" value="Eukaryota"/>
</dbReference>
<dbReference type="GeneTree" id="ENSGT00550000074953"/>
<dbReference type="HOGENOM" id="CLU_000688_0_8_1"/>
<dbReference type="InParanoid" id="Q99LC9"/>
<dbReference type="OMA" id="QCKFAAC"/>
<dbReference type="OrthoDB" id="2187at2759"/>
<dbReference type="PhylomeDB" id="Q99LC9"/>
<dbReference type="TreeFam" id="TF106428"/>
<dbReference type="BRENDA" id="3.6.4.7">
    <property type="organism ID" value="3474"/>
</dbReference>
<dbReference type="Reactome" id="R-MMU-9033241">
    <property type="pathway name" value="Peroxisomal protein import"/>
</dbReference>
<dbReference type="BioGRID-ORCS" id="224824">
    <property type="hits" value="8 hits in 82 CRISPR screens"/>
</dbReference>
<dbReference type="PRO" id="PR:Q99LC9"/>
<dbReference type="Proteomes" id="UP000000589">
    <property type="component" value="Chromosome 17"/>
</dbReference>
<dbReference type="RNAct" id="Q99LC9">
    <property type="molecule type" value="protein"/>
</dbReference>
<dbReference type="Bgee" id="ENSMUSG00000002763">
    <property type="expression patterns" value="Expressed in rostral migratory stream and 256 other cell types or tissues"/>
</dbReference>
<dbReference type="GO" id="GO:0005829">
    <property type="term" value="C:cytosol"/>
    <property type="evidence" value="ECO:0007669"/>
    <property type="project" value="UniProtKB-SubCell"/>
</dbReference>
<dbReference type="GO" id="GO:0005778">
    <property type="term" value="C:peroxisomal membrane"/>
    <property type="evidence" value="ECO:0000250"/>
    <property type="project" value="UniProtKB"/>
</dbReference>
<dbReference type="GO" id="GO:0097733">
    <property type="term" value="C:photoreceptor cell cilium"/>
    <property type="evidence" value="ECO:0000314"/>
    <property type="project" value="UniProtKB"/>
</dbReference>
<dbReference type="GO" id="GO:0001750">
    <property type="term" value="C:photoreceptor outer segment"/>
    <property type="evidence" value="ECO:0007669"/>
    <property type="project" value="UniProtKB-SubCell"/>
</dbReference>
<dbReference type="GO" id="GO:0005524">
    <property type="term" value="F:ATP binding"/>
    <property type="evidence" value="ECO:0007669"/>
    <property type="project" value="UniProtKB-KW"/>
</dbReference>
<dbReference type="GO" id="GO:0016887">
    <property type="term" value="F:ATP hydrolysis activity"/>
    <property type="evidence" value="ECO:0007669"/>
    <property type="project" value="Ensembl"/>
</dbReference>
<dbReference type="GO" id="GO:0140318">
    <property type="term" value="F:protein transporter activity"/>
    <property type="evidence" value="ECO:0000250"/>
    <property type="project" value="UniProtKB"/>
</dbReference>
<dbReference type="GO" id="GO:0044877">
    <property type="term" value="F:protein-containing complex binding"/>
    <property type="evidence" value="ECO:0007669"/>
    <property type="project" value="Ensembl"/>
</dbReference>
<dbReference type="GO" id="GO:0140036">
    <property type="term" value="F:ubiquitin-modified protein reader activity"/>
    <property type="evidence" value="ECO:0000250"/>
    <property type="project" value="UniProtKB"/>
</dbReference>
<dbReference type="GO" id="GO:0016562">
    <property type="term" value="P:protein import into peroxisome matrix, receptor recycling"/>
    <property type="evidence" value="ECO:0000250"/>
    <property type="project" value="UniProtKB"/>
</dbReference>
<dbReference type="GO" id="GO:0016561">
    <property type="term" value="P:protein import into peroxisome matrix, translocation"/>
    <property type="evidence" value="ECO:0007669"/>
    <property type="project" value="Ensembl"/>
</dbReference>
<dbReference type="GO" id="GO:0050821">
    <property type="term" value="P:protein stabilization"/>
    <property type="evidence" value="ECO:0007669"/>
    <property type="project" value="Ensembl"/>
</dbReference>
<dbReference type="GO" id="GO:0006625">
    <property type="term" value="P:protein targeting to peroxisome"/>
    <property type="evidence" value="ECO:0007669"/>
    <property type="project" value="Ensembl"/>
</dbReference>
<dbReference type="GO" id="GO:0043335">
    <property type="term" value="P:protein unfolding"/>
    <property type="evidence" value="ECO:0000250"/>
    <property type="project" value="UniProtKB"/>
</dbReference>
<dbReference type="CDD" id="cd19527">
    <property type="entry name" value="RecA-like_PEX6_r2"/>
    <property type="match status" value="1"/>
</dbReference>
<dbReference type="CDD" id="cd19481">
    <property type="entry name" value="RecA-like_protease"/>
    <property type="match status" value="1"/>
</dbReference>
<dbReference type="FunFam" id="3.40.50.300:FF:000109">
    <property type="entry name" value="Peroxisomal biogenesis factor 6"/>
    <property type="match status" value="1"/>
</dbReference>
<dbReference type="FunFam" id="1.10.8.60:FF:000039">
    <property type="entry name" value="peroxisome biogenesis factor 6"/>
    <property type="match status" value="1"/>
</dbReference>
<dbReference type="FunFam" id="1.10.8.60:FF:000059">
    <property type="entry name" value="peroxisome biogenesis factor 6"/>
    <property type="match status" value="1"/>
</dbReference>
<dbReference type="FunFam" id="3.40.50.300:FF:000988">
    <property type="entry name" value="peroxisome biogenesis factor 6"/>
    <property type="match status" value="1"/>
</dbReference>
<dbReference type="Gene3D" id="1.10.8.60">
    <property type="match status" value="2"/>
</dbReference>
<dbReference type="Gene3D" id="3.40.50.300">
    <property type="entry name" value="P-loop containing nucleotide triphosphate hydrolases"/>
    <property type="match status" value="2"/>
</dbReference>
<dbReference type="InterPro" id="IPR003593">
    <property type="entry name" value="AAA+_ATPase"/>
</dbReference>
<dbReference type="InterPro" id="IPR050168">
    <property type="entry name" value="AAA_ATPase_domain"/>
</dbReference>
<dbReference type="InterPro" id="IPR003959">
    <property type="entry name" value="ATPase_AAA_core"/>
</dbReference>
<dbReference type="InterPro" id="IPR003960">
    <property type="entry name" value="ATPase_AAA_CS"/>
</dbReference>
<dbReference type="InterPro" id="IPR027417">
    <property type="entry name" value="P-loop_NTPase"/>
</dbReference>
<dbReference type="InterPro" id="IPR047533">
    <property type="entry name" value="RecA-like_PEX6_r2"/>
</dbReference>
<dbReference type="PANTHER" id="PTHR23077">
    <property type="entry name" value="AAA-FAMILY ATPASE"/>
    <property type="match status" value="1"/>
</dbReference>
<dbReference type="PANTHER" id="PTHR23077:SF9">
    <property type="entry name" value="PEROXISOMAL ATPASE PEX6"/>
    <property type="match status" value="1"/>
</dbReference>
<dbReference type="Pfam" id="PF00004">
    <property type="entry name" value="AAA"/>
    <property type="match status" value="2"/>
</dbReference>
<dbReference type="Pfam" id="PF25395">
    <property type="entry name" value="DPBB_PEX6"/>
    <property type="match status" value="1"/>
</dbReference>
<dbReference type="Pfam" id="PF25394">
    <property type="entry name" value="PEX6_vert_N"/>
    <property type="match status" value="1"/>
</dbReference>
<dbReference type="SMART" id="SM00382">
    <property type="entry name" value="AAA"/>
    <property type="match status" value="2"/>
</dbReference>
<dbReference type="SUPFAM" id="SSF52540">
    <property type="entry name" value="P-loop containing nucleoside triphosphate hydrolases"/>
    <property type="match status" value="2"/>
</dbReference>
<dbReference type="PROSITE" id="PS00674">
    <property type="entry name" value="AAA"/>
    <property type="match status" value="1"/>
</dbReference>
<gene>
    <name evidence="5 7" type="primary">Pex6</name>
</gene>
<name>PEX6_MOUSE</name>
<accession>Q99LC9</accession>
<accession>Q6YNQ9</accession>
<proteinExistence type="evidence at protein level"/>
<protein>
    <recommendedName>
        <fullName evidence="6">Peroxisomal ATPase PEX6</fullName>
        <ecNumber evidence="1">3.6.4.-</ecNumber>
    </recommendedName>
    <alternativeName>
        <fullName evidence="6">Peroxin-6</fullName>
    </alternativeName>
    <alternativeName>
        <fullName evidence="6">Peroxisomal biogenesis factor 6</fullName>
    </alternativeName>
</protein>